<accession>P86670</accession>
<organism>
    <name type="scientific">Sphodromantis viridis</name>
    <name type="common">Giant African praying mantis</name>
    <dbReference type="NCBI Taxonomy" id="267111"/>
    <lineage>
        <taxon>Eukaryota</taxon>
        <taxon>Metazoa</taxon>
        <taxon>Ecdysozoa</taxon>
        <taxon>Arthropoda</taxon>
        <taxon>Hexapoda</taxon>
        <taxon>Insecta</taxon>
        <taxon>Pterygota</taxon>
        <taxon>Neoptera</taxon>
        <taxon>Polyneoptera</taxon>
        <taxon>Dictyoptera</taxon>
        <taxon>Mantodea</taxon>
        <taxon>Eumantodea</taxon>
        <taxon>Mantoidea</taxon>
        <taxon>Mantidae</taxon>
        <taxon>Tenoderinae</taxon>
        <taxon>Paramantini</taxon>
        <taxon>Sphodromantis</taxon>
    </lineage>
</organism>
<comment type="function">
    <text evidence="1">Mediates visceral muscle contractile activity (myotropic activity).</text>
</comment>
<comment type="subcellular location">
    <subcellularLocation>
        <location evidence="2">Secreted</location>
    </subcellularLocation>
</comment>
<comment type="mass spectrometry"/>
<comment type="mass spectrometry">
    <text>With pyroglutamate at Gln-1.</text>
</comment>
<comment type="similarity">
    <text evidence="3">Belongs to the periviscerokinin family.</text>
</comment>
<dbReference type="GO" id="GO:0005576">
    <property type="term" value="C:extracellular region"/>
    <property type="evidence" value="ECO:0007669"/>
    <property type="project" value="UniProtKB-SubCell"/>
</dbReference>
<dbReference type="GO" id="GO:0007218">
    <property type="term" value="P:neuropeptide signaling pathway"/>
    <property type="evidence" value="ECO:0007669"/>
    <property type="project" value="UniProtKB-KW"/>
</dbReference>
<dbReference type="InterPro" id="IPR013231">
    <property type="entry name" value="Periviscerokinin"/>
</dbReference>
<dbReference type="Pfam" id="PF08259">
    <property type="entry name" value="Periviscerokin"/>
    <property type="match status" value="1"/>
</dbReference>
<reference evidence="6" key="1">
    <citation type="journal article" date="2010" name="Peptides">
        <title>CAPA-peptides of praying mantids (Mantodea).</title>
        <authorList>
            <person name="Koehler R."/>
            <person name="Predel R."/>
        </authorList>
    </citation>
    <scope>PROTEIN SEQUENCE</scope>
    <scope>MASS SPECTROMETRY</scope>
    <scope>PYROGLUTAMATE FORMATION AT GLN-1</scope>
    <scope>AMIDATION AT VAL-9</scope>
    <source>
        <tissue evidence="4">Abdominal perisympathetic organs</tissue>
    </source>
</reference>
<feature type="peptide" id="PRO_0000395577" description="Periviscerokinin-1" evidence="4">
    <location>
        <begin position="1"/>
        <end position="9"/>
    </location>
</feature>
<feature type="modified residue" description="Pyrrolidone carboxylic acid; partial" evidence="4">
    <location>
        <position position="1"/>
    </location>
</feature>
<feature type="modified residue" description="Valine amide" evidence="4">
    <location>
        <position position="9"/>
    </location>
</feature>
<feature type="unsure residue" description="L or I" evidence="4">
    <location>
        <position position="3"/>
    </location>
</feature>
<feature type="unsure residue" description="I or L" evidence="4">
    <location>
        <position position="4"/>
    </location>
</feature>
<sequence>QGLIPFPRV</sequence>
<proteinExistence type="evidence at protein level"/>
<name>PVK1_SPHVI</name>
<protein>
    <recommendedName>
        <fullName evidence="5">Periviscerokinin-1</fullName>
    </recommendedName>
</protein>
<evidence type="ECO:0000250" key="1">
    <source>
        <dbReference type="UniProtKB" id="P83923"/>
    </source>
</evidence>
<evidence type="ECO:0000250" key="2">
    <source>
        <dbReference type="UniProtKB" id="P84375"/>
    </source>
</evidence>
<evidence type="ECO:0000255" key="3"/>
<evidence type="ECO:0000269" key="4">
    <source>
    </source>
</evidence>
<evidence type="ECO:0000303" key="5">
    <source>
    </source>
</evidence>
<evidence type="ECO:0000305" key="6"/>
<keyword id="KW-0027">Amidation</keyword>
<keyword id="KW-0903">Direct protein sequencing</keyword>
<keyword id="KW-0527">Neuropeptide</keyword>
<keyword id="KW-0873">Pyrrolidone carboxylic acid</keyword>
<keyword id="KW-0964">Secreted</keyword>